<proteinExistence type="inferred from homology"/>
<name>HEM3_BUCAT</name>
<gene>
    <name evidence="1" type="primary">hemC</name>
    <name type="ordered locus">BUAPTUC7_585</name>
</gene>
<reference key="1">
    <citation type="journal article" date="2009" name="Science">
        <title>The dynamics and time scale of ongoing genomic erosion in symbiotic bacteria.</title>
        <authorList>
            <person name="Moran N.A."/>
            <person name="McLaughlin H.J."/>
            <person name="Sorek R."/>
        </authorList>
    </citation>
    <scope>NUCLEOTIDE SEQUENCE [LARGE SCALE GENOMIC DNA]</scope>
    <source>
        <strain>Tuc7</strain>
    </source>
</reference>
<comment type="function">
    <text evidence="1">Tetrapolymerization of the monopyrrole PBG into the hydroxymethylbilane pre-uroporphyrinogen in several discrete steps.</text>
</comment>
<comment type="catalytic activity">
    <reaction evidence="1">
        <text>4 porphobilinogen + H2O = hydroxymethylbilane + 4 NH4(+)</text>
        <dbReference type="Rhea" id="RHEA:13185"/>
        <dbReference type="ChEBI" id="CHEBI:15377"/>
        <dbReference type="ChEBI" id="CHEBI:28938"/>
        <dbReference type="ChEBI" id="CHEBI:57845"/>
        <dbReference type="ChEBI" id="CHEBI:58126"/>
        <dbReference type="EC" id="2.5.1.61"/>
    </reaction>
</comment>
<comment type="cofactor">
    <cofactor evidence="1">
        <name>dipyrromethane</name>
        <dbReference type="ChEBI" id="CHEBI:60342"/>
    </cofactor>
    <text evidence="1">Binds 1 dipyrromethane group covalently.</text>
</comment>
<comment type="pathway">
    <text evidence="1">Porphyrin-containing compound metabolism; protoporphyrin-IX biosynthesis; coproporphyrinogen-III from 5-aminolevulinate: step 2/4.</text>
</comment>
<comment type="subunit">
    <text evidence="1">Monomer.</text>
</comment>
<comment type="miscellaneous">
    <text evidence="1">The porphobilinogen subunits are added to the dipyrromethane group.</text>
</comment>
<comment type="similarity">
    <text evidence="1">Belongs to the HMBS family.</text>
</comment>
<keyword id="KW-0627">Porphyrin biosynthesis</keyword>
<keyword id="KW-0808">Transferase</keyword>
<sequence length="314" mass="35025">MYNKTLRIATRKSPLALKQTKYVQKKILSLYPDLNIKLVPIVTHGDNILNKSLSKIGGKGLFIKELELALLENKADIAIHSMKDLPVKITKELCLVSICKRGNALDSLVSNNYQSINQLPKGAIVGTSSLRRQCQLITYRPDLIISPLRGNIETRIAKLDQGKYDAIILATEGLNRLRLKNRITQIIPAELSLPSCGQGAIGIQSRLHDKKVLFFLSRLNHINTFIEINAERAFCRKLESGCQIPIGSYAILKKNKIWLRGLVGSPNGKIILKGERIGCYNTGEKMGYSLADELLKNGAKNILNNLHIKQSYCI</sequence>
<accession>B8D8B0</accession>
<organism>
    <name type="scientific">Buchnera aphidicola subsp. Acyrthosiphon pisum (strain Tuc7)</name>
    <dbReference type="NCBI Taxonomy" id="561501"/>
    <lineage>
        <taxon>Bacteria</taxon>
        <taxon>Pseudomonadati</taxon>
        <taxon>Pseudomonadota</taxon>
        <taxon>Gammaproteobacteria</taxon>
        <taxon>Enterobacterales</taxon>
        <taxon>Erwiniaceae</taxon>
        <taxon>Buchnera</taxon>
    </lineage>
</organism>
<evidence type="ECO:0000255" key="1">
    <source>
        <dbReference type="HAMAP-Rule" id="MF_00260"/>
    </source>
</evidence>
<dbReference type="EC" id="2.5.1.61" evidence="1"/>
<dbReference type="EMBL" id="CP001158">
    <property type="protein sequence ID" value="ACL30375.1"/>
    <property type="molecule type" value="Genomic_DNA"/>
</dbReference>
<dbReference type="RefSeq" id="WP_009874541.1">
    <property type="nucleotide sequence ID" value="NC_011834.1"/>
</dbReference>
<dbReference type="SMR" id="B8D8B0"/>
<dbReference type="KEGG" id="bau:BUAPTUC7_585"/>
<dbReference type="HOGENOM" id="CLU_019704_0_2_6"/>
<dbReference type="UniPathway" id="UPA00251">
    <property type="reaction ID" value="UER00319"/>
</dbReference>
<dbReference type="GO" id="GO:0005737">
    <property type="term" value="C:cytoplasm"/>
    <property type="evidence" value="ECO:0007669"/>
    <property type="project" value="TreeGrafter"/>
</dbReference>
<dbReference type="GO" id="GO:0004418">
    <property type="term" value="F:hydroxymethylbilane synthase activity"/>
    <property type="evidence" value="ECO:0007669"/>
    <property type="project" value="UniProtKB-UniRule"/>
</dbReference>
<dbReference type="GO" id="GO:0006782">
    <property type="term" value="P:protoporphyrinogen IX biosynthetic process"/>
    <property type="evidence" value="ECO:0007669"/>
    <property type="project" value="UniProtKB-UniRule"/>
</dbReference>
<dbReference type="CDD" id="cd13646">
    <property type="entry name" value="PBP2_EcHMBS_like"/>
    <property type="match status" value="1"/>
</dbReference>
<dbReference type="FunFam" id="3.30.160.40:FF:000002">
    <property type="entry name" value="Porphobilinogen deaminase"/>
    <property type="match status" value="1"/>
</dbReference>
<dbReference type="FunFam" id="3.40.190.10:FF:000004">
    <property type="entry name" value="Porphobilinogen deaminase"/>
    <property type="match status" value="1"/>
</dbReference>
<dbReference type="FunFam" id="3.40.190.10:FF:000005">
    <property type="entry name" value="Porphobilinogen deaminase"/>
    <property type="match status" value="1"/>
</dbReference>
<dbReference type="Gene3D" id="3.40.190.10">
    <property type="entry name" value="Periplasmic binding protein-like II"/>
    <property type="match status" value="2"/>
</dbReference>
<dbReference type="Gene3D" id="3.30.160.40">
    <property type="entry name" value="Porphobilinogen deaminase, C-terminal domain"/>
    <property type="match status" value="1"/>
</dbReference>
<dbReference type="HAMAP" id="MF_00260">
    <property type="entry name" value="Porphobil_deam"/>
    <property type="match status" value="1"/>
</dbReference>
<dbReference type="InterPro" id="IPR000860">
    <property type="entry name" value="HemC"/>
</dbReference>
<dbReference type="InterPro" id="IPR022419">
    <property type="entry name" value="Porphobilin_deaminase_cofac_BS"/>
</dbReference>
<dbReference type="InterPro" id="IPR022417">
    <property type="entry name" value="Porphobilin_deaminase_N"/>
</dbReference>
<dbReference type="InterPro" id="IPR022418">
    <property type="entry name" value="Porphobilinogen_deaminase_C"/>
</dbReference>
<dbReference type="InterPro" id="IPR036803">
    <property type="entry name" value="Porphobilinogen_deaminase_C_sf"/>
</dbReference>
<dbReference type="NCBIfam" id="TIGR00212">
    <property type="entry name" value="hemC"/>
    <property type="match status" value="1"/>
</dbReference>
<dbReference type="PANTHER" id="PTHR11557">
    <property type="entry name" value="PORPHOBILINOGEN DEAMINASE"/>
    <property type="match status" value="1"/>
</dbReference>
<dbReference type="PANTHER" id="PTHR11557:SF0">
    <property type="entry name" value="PORPHOBILINOGEN DEAMINASE"/>
    <property type="match status" value="1"/>
</dbReference>
<dbReference type="Pfam" id="PF01379">
    <property type="entry name" value="Porphobil_deam"/>
    <property type="match status" value="1"/>
</dbReference>
<dbReference type="Pfam" id="PF03900">
    <property type="entry name" value="Porphobil_deamC"/>
    <property type="match status" value="1"/>
</dbReference>
<dbReference type="PIRSF" id="PIRSF001438">
    <property type="entry name" value="4pyrrol_synth_OHMeBilane_synth"/>
    <property type="match status" value="1"/>
</dbReference>
<dbReference type="PRINTS" id="PR00151">
    <property type="entry name" value="PORPHBDMNASE"/>
</dbReference>
<dbReference type="SUPFAM" id="SSF53850">
    <property type="entry name" value="Periplasmic binding protein-like II"/>
    <property type="match status" value="1"/>
</dbReference>
<dbReference type="SUPFAM" id="SSF54782">
    <property type="entry name" value="Porphobilinogen deaminase (hydroxymethylbilane synthase), C-terminal domain"/>
    <property type="match status" value="1"/>
</dbReference>
<dbReference type="PROSITE" id="PS00533">
    <property type="entry name" value="PORPHOBILINOGEN_DEAM"/>
    <property type="match status" value="1"/>
</dbReference>
<protein>
    <recommendedName>
        <fullName evidence="1">Porphobilinogen deaminase</fullName>
        <shortName evidence="1">PBG</shortName>
        <ecNumber evidence="1">2.5.1.61</ecNumber>
    </recommendedName>
    <alternativeName>
        <fullName evidence="1">Hydroxymethylbilane synthase</fullName>
        <shortName evidence="1">HMBS</shortName>
    </alternativeName>
    <alternativeName>
        <fullName evidence="1">Pre-uroporphyrinogen synthase</fullName>
    </alternativeName>
</protein>
<feature type="chain" id="PRO_1000125657" description="Porphobilinogen deaminase">
    <location>
        <begin position="1"/>
        <end position="314"/>
    </location>
</feature>
<feature type="modified residue" description="S-(dipyrrolylmethanemethyl)cysteine" evidence="1">
    <location>
        <position position="242"/>
    </location>
</feature>